<sequence length="187" mass="21598">MGRYSREPDNPAKSCKARGSNLRVHFKNTYETAMAIRKMPLRRAVRYLKNVIEKKECIPFRRFNGGVGRCAQAKQFGTTQGRWPKKSAEFLLQLLRNAESNADNKTLDVDRLVIDHIQVNRAPCLRRRTYRAHGRINPYMSSPCHIEVCLSEREDAVARVAPTDDAPAKKKLSKKKLARQKEKMMRE</sequence>
<evidence type="ECO:0000256" key="1">
    <source>
        <dbReference type="SAM" id="MobiDB-lite"/>
    </source>
</evidence>
<evidence type="ECO:0000305" key="2"/>
<reference key="1">
    <citation type="submission" date="2004-09" db="EMBL/GenBank/DDBJ databases">
        <title>Ribosomal proteins of Bombyx mori.</title>
        <authorList>
            <person name="Heckel D.G."/>
            <person name="Morgan M."/>
            <person name="Shimada T."/>
            <person name="Mita K."/>
        </authorList>
    </citation>
    <scope>NUCLEOTIDE SEQUENCE [MRNA]</scope>
    <source>
        <strain>C108</strain>
    </source>
</reference>
<dbReference type="EMBL" id="AY769286">
    <property type="protein sequence ID" value="AAV34828.1"/>
    <property type="molecule type" value="mRNA"/>
</dbReference>
<dbReference type="RefSeq" id="NP_001037165.1">
    <property type="nucleotide sequence ID" value="NM_001043700.1"/>
</dbReference>
<dbReference type="RefSeq" id="XP_012545340.1">
    <property type="nucleotide sequence ID" value="XM_012689886.4"/>
</dbReference>
<dbReference type="RefSeq" id="XP_021203293.1">
    <property type="nucleotide sequence ID" value="XM_021347618.2"/>
</dbReference>
<dbReference type="SMR" id="Q5UAS2"/>
<dbReference type="FunCoup" id="Q5UAS2">
    <property type="interactions" value="667"/>
</dbReference>
<dbReference type="STRING" id="7091.Q5UAS2"/>
<dbReference type="PaxDb" id="7091-BGIBMGA012414-TA"/>
<dbReference type="EnsemblMetazoa" id="NM_001043700.1">
    <property type="protein sequence ID" value="NP_001037165.1"/>
    <property type="gene ID" value="GeneID_692671"/>
</dbReference>
<dbReference type="EnsemblMetazoa" id="XM_012689886.3">
    <property type="protein sequence ID" value="XP_012545340.1"/>
    <property type="gene ID" value="GeneID_692671"/>
</dbReference>
<dbReference type="EnsemblMetazoa" id="XM_021347618.1">
    <property type="protein sequence ID" value="XP_021203293.1"/>
    <property type="gene ID" value="GeneID_692671"/>
</dbReference>
<dbReference type="GeneID" id="692671"/>
<dbReference type="KEGG" id="bmor:692671"/>
<dbReference type="CTD" id="6139"/>
<dbReference type="eggNOG" id="KOG3353">
    <property type="taxonomic scope" value="Eukaryota"/>
</dbReference>
<dbReference type="HOGENOM" id="CLU_083987_0_1_1"/>
<dbReference type="InParanoid" id="Q5UAS2"/>
<dbReference type="OMA" id="QVNHAPC"/>
<dbReference type="OrthoDB" id="298541at7088"/>
<dbReference type="Proteomes" id="UP000005204">
    <property type="component" value="Unassembled WGS sequence"/>
</dbReference>
<dbReference type="GO" id="GO:0022625">
    <property type="term" value="C:cytosolic large ribosomal subunit"/>
    <property type="evidence" value="ECO:0007669"/>
    <property type="project" value="TreeGrafter"/>
</dbReference>
<dbReference type="GO" id="GO:0003735">
    <property type="term" value="F:structural constituent of ribosome"/>
    <property type="evidence" value="ECO:0007669"/>
    <property type="project" value="InterPro"/>
</dbReference>
<dbReference type="GO" id="GO:0002181">
    <property type="term" value="P:cytoplasmic translation"/>
    <property type="evidence" value="ECO:0007669"/>
    <property type="project" value="TreeGrafter"/>
</dbReference>
<dbReference type="CDD" id="cd00336">
    <property type="entry name" value="Ribosomal_L22"/>
    <property type="match status" value="1"/>
</dbReference>
<dbReference type="FunFam" id="3.90.470.10:FF:000003">
    <property type="entry name" value="60S ribosomal protein L17"/>
    <property type="match status" value="1"/>
</dbReference>
<dbReference type="Gene3D" id="3.90.470.10">
    <property type="entry name" value="Ribosomal protein L22/L17"/>
    <property type="match status" value="1"/>
</dbReference>
<dbReference type="InterPro" id="IPR001063">
    <property type="entry name" value="Ribosomal_uL22"/>
</dbReference>
<dbReference type="InterPro" id="IPR018260">
    <property type="entry name" value="Ribosomal_uL22_CS"/>
</dbReference>
<dbReference type="InterPro" id="IPR005721">
    <property type="entry name" value="Ribosomal_uL22_euk/arc"/>
</dbReference>
<dbReference type="InterPro" id="IPR036394">
    <property type="entry name" value="Ribosomal_uL22_sf"/>
</dbReference>
<dbReference type="NCBIfam" id="NF003260">
    <property type="entry name" value="PRK04223.1"/>
    <property type="match status" value="1"/>
</dbReference>
<dbReference type="NCBIfam" id="TIGR01038">
    <property type="entry name" value="uL22_arch_euk"/>
    <property type="match status" value="1"/>
</dbReference>
<dbReference type="PANTHER" id="PTHR11593">
    <property type="entry name" value="60S RIBOSOMAL PROTEIN L17"/>
    <property type="match status" value="1"/>
</dbReference>
<dbReference type="PANTHER" id="PTHR11593:SF10">
    <property type="entry name" value="60S RIBOSOMAL PROTEIN L17"/>
    <property type="match status" value="1"/>
</dbReference>
<dbReference type="Pfam" id="PF00237">
    <property type="entry name" value="Ribosomal_L22"/>
    <property type="match status" value="1"/>
</dbReference>
<dbReference type="SUPFAM" id="SSF54843">
    <property type="entry name" value="Ribosomal protein L22"/>
    <property type="match status" value="1"/>
</dbReference>
<dbReference type="PROSITE" id="PS00464">
    <property type="entry name" value="RIBOSOMAL_L22"/>
    <property type="match status" value="1"/>
</dbReference>
<proteinExistence type="evidence at transcript level"/>
<feature type="chain" id="PRO_0000323409" description="Large ribosomal subunit protein uL22">
    <location>
        <begin position="1"/>
        <end position="187"/>
    </location>
</feature>
<feature type="region of interest" description="Disordered" evidence="1">
    <location>
        <begin position="161"/>
        <end position="187"/>
    </location>
</feature>
<feature type="compositionally biased region" description="Basic residues" evidence="1">
    <location>
        <begin position="169"/>
        <end position="178"/>
    </location>
</feature>
<accession>Q5UAS2</accession>
<gene>
    <name type="primary">RpL17</name>
</gene>
<keyword id="KW-1185">Reference proteome</keyword>
<keyword id="KW-0687">Ribonucleoprotein</keyword>
<keyword id="KW-0689">Ribosomal protein</keyword>
<organism>
    <name type="scientific">Bombyx mori</name>
    <name type="common">Silk moth</name>
    <dbReference type="NCBI Taxonomy" id="7091"/>
    <lineage>
        <taxon>Eukaryota</taxon>
        <taxon>Metazoa</taxon>
        <taxon>Ecdysozoa</taxon>
        <taxon>Arthropoda</taxon>
        <taxon>Hexapoda</taxon>
        <taxon>Insecta</taxon>
        <taxon>Pterygota</taxon>
        <taxon>Neoptera</taxon>
        <taxon>Endopterygota</taxon>
        <taxon>Lepidoptera</taxon>
        <taxon>Glossata</taxon>
        <taxon>Ditrysia</taxon>
        <taxon>Bombycoidea</taxon>
        <taxon>Bombycidae</taxon>
        <taxon>Bombycinae</taxon>
        <taxon>Bombyx</taxon>
    </lineage>
</organism>
<comment type="similarity">
    <text evidence="2">Belongs to the universal ribosomal protein uL22 family.</text>
</comment>
<protein>
    <recommendedName>
        <fullName evidence="2">Large ribosomal subunit protein uL22</fullName>
    </recommendedName>
    <alternativeName>
        <fullName>60S ribosomal protein L17</fullName>
    </alternativeName>
</protein>
<name>RL17_BOMMO</name>